<organism>
    <name type="scientific">Methanosarcina mazei (strain ATCC BAA-159 / DSM 3647 / Goe1 / Go1 / JCM 11833 / OCM 88)</name>
    <name type="common">Methanosarcina frisia</name>
    <dbReference type="NCBI Taxonomy" id="192952"/>
    <lineage>
        <taxon>Archaea</taxon>
        <taxon>Methanobacteriati</taxon>
        <taxon>Methanobacteriota</taxon>
        <taxon>Stenosarchaea group</taxon>
        <taxon>Methanomicrobia</taxon>
        <taxon>Methanosarcinales</taxon>
        <taxon>Methanosarcinaceae</taxon>
        <taxon>Methanosarcina</taxon>
    </lineage>
</organism>
<gene>
    <name type="ordered locus">MM_1910</name>
</gene>
<accession>Q8PVQ2</accession>
<feature type="chain" id="PRO_0000123085" description="dTTP/UTP pyrophosphatase">
    <location>
        <begin position="1"/>
        <end position="197"/>
    </location>
</feature>
<feature type="active site" description="Proton acceptor" evidence="1">
    <location>
        <position position="70"/>
    </location>
</feature>
<feature type="site" description="Important for substrate specificity" evidence="1">
    <location>
        <position position="12"/>
    </location>
</feature>
<feature type="site" description="Important for substrate specificity" evidence="1">
    <location>
        <position position="71"/>
    </location>
</feature>
<feature type="site" description="Important for substrate specificity" evidence="1">
    <location>
        <position position="155"/>
    </location>
</feature>
<reference key="1">
    <citation type="journal article" date="2002" name="J. Mol. Microbiol. Biotechnol.">
        <title>The genome of Methanosarcina mazei: evidence for lateral gene transfer between Bacteria and Archaea.</title>
        <authorList>
            <person name="Deppenmeier U."/>
            <person name="Johann A."/>
            <person name="Hartsch T."/>
            <person name="Merkl R."/>
            <person name="Schmitz R.A."/>
            <person name="Martinez-Arias R."/>
            <person name="Henne A."/>
            <person name="Wiezer A."/>
            <person name="Baeumer S."/>
            <person name="Jacobi C."/>
            <person name="Brueggemann H."/>
            <person name="Lienard T."/>
            <person name="Christmann A."/>
            <person name="Boemecke M."/>
            <person name="Steckel S."/>
            <person name="Bhattacharyya A."/>
            <person name="Lykidis A."/>
            <person name="Overbeek R."/>
            <person name="Klenk H.-P."/>
            <person name="Gunsalus R.P."/>
            <person name="Fritz H.-J."/>
            <person name="Gottschalk G."/>
        </authorList>
    </citation>
    <scope>NUCLEOTIDE SEQUENCE [LARGE SCALE GENOMIC DNA]</scope>
    <source>
        <strain>ATCC BAA-159 / DSM 3647 / Goe1 / Go1 / JCM 11833 / OCM 88</strain>
    </source>
</reference>
<keyword id="KW-0963">Cytoplasm</keyword>
<keyword id="KW-0378">Hydrolase</keyword>
<keyword id="KW-0546">Nucleotide metabolism</keyword>
<comment type="function">
    <text evidence="1">Nucleoside triphosphate pyrophosphatase that hydrolyzes dTTP and UTP. May have a dual role in cell division arrest and in preventing the incorporation of modified nucleotides into cellular nucleic acids.</text>
</comment>
<comment type="catalytic activity">
    <reaction evidence="1">
        <text>dTTP + H2O = dTMP + diphosphate + H(+)</text>
        <dbReference type="Rhea" id="RHEA:28534"/>
        <dbReference type="ChEBI" id="CHEBI:15377"/>
        <dbReference type="ChEBI" id="CHEBI:15378"/>
        <dbReference type="ChEBI" id="CHEBI:33019"/>
        <dbReference type="ChEBI" id="CHEBI:37568"/>
        <dbReference type="ChEBI" id="CHEBI:63528"/>
        <dbReference type="EC" id="3.6.1.9"/>
    </reaction>
</comment>
<comment type="catalytic activity">
    <reaction evidence="1">
        <text>UTP + H2O = UMP + diphosphate + H(+)</text>
        <dbReference type="Rhea" id="RHEA:29395"/>
        <dbReference type="ChEBI" id="CHEBI:15377"/>
        <dbReference type="ChEBI" id="CHEBI:15378"/>
        <dbReference type="ChEBI" id="CHEBI:33019"/>
        <dbReference type="ChEBI" id="CHEBI:46398"/>
        <dbReference type="ChEBI" id="CHEBI:57865"/>
        <dbReference type="EC" id="3.6.1.9"/>
    </reaction>
</comment>
<comment type="cofactor">
    <cofactor evidence="1">
        <name>a divalent metal cation</name>
        <dbReference type="ChEBI" id="CHEBI:60240"/>
    </cofactor>
</comment>
<comment type="subcellular location">
    <subcellularLocation>
        <location evidence="1">Cytoplasm</location>
    </subcellularLocation>
</comment>
<comment type="similarity">
    <text evidence="1">Belongs to the Maf family. YhdE subfamily.</text>
</comment>
<comment type="sequence caution" evidence="2">
    <conflict type="erroneous initiation">
        <sequence resource="EMBL-CDS" id="AAM31606"/>
    </conflict>
</comment>
<evidence type="ECO:0000255" key="1">
    <source>
        <dbReference type="HAMAP-Rule" id="MF_00528"/>
    </source>
</evidence>
<evidence type="ECO:0000305" key="2"/>
<sequence length="197" mass="21751">MRRIILASASPRRKELLRQLIGDNFLVSPSSYEEPPQPDLAPEELLIRHSIGKARDVAKHFSSGIIISADTSVLYNGEVLGKPNFPEKAEEMLKKLNGRKFRVVTGLTVLDLDSAQEISESESTDVWMSEMDDEQILAYVRTGEPLDKAGAFAAQGKGAVLIERIEGDFFNAVGLPLFRLGKILEKLGVSVFDESFS</sequence>
<protein>
    <recommendedName>
        <fullName evidence="1">dTTP/UTP pyrophosphatase</fullName>
        <shortName evidence="1">dTTPase/UTPase</shortName>
        <ecNumber evidence="1">3.6.1.9</ecNumber>
    </recommendedName>
    <alternativeName>
        <fullName evidence="1">Nucleoside triphosphate pyrophosphatase</fullName>
    </alternativeName>
    <alternativeName>
        <fullName evidence="1">Nucleotide pyrophosphatase</fullName>
        <shortName evidence="1">Nucleotide PPase</shortName>
    </alternativeName>
</protein>
<proteinExistence type="inferred from homology"/>
<name>NTPPA_METMA</name>
<dbReference type="EC" id="3.6.1.9" evidence="1"/>
<dbReference type="EMBL" id="AE008384">
    <property type="protein sequence ID" value="AAM31606.1"/>
    <property type="status" value="ALT_INIT"/>
    <property type="molecule type" value="Genomic_DNA"/>
</dbReference>
<dbReference type="RefSeq" id="WP_048044041.1">
    <property type="nucleotide sequence ID" value="NC_003901.1"/>
</dbReference>
<dbReference type="SMR" id="Q8PVQ2"/>
<dbReference type="KEGG" id="mma:MM_1910"/>
<dbReference type="PATRIC" id="fig|192952.21.peg.2200"/>
<dbReference type="eggNOG" id="arCOG05007">
    <property type="taxonomic scope" value="Archaea"/>
</dbReference>
<dbReference type="HOGENOM" id="CLU_040416_0_0_2"/>
<dbReference type="Proteomes" id="UP000000595">
    <property type="component" value="Chromosome"/>
</dbReference>
<dbReference type="GO" id="GO:0005737">
    <property type="term" value="C:cytoplasm"/>
    <property type="evidence" value="ECO:0007669"/>
    <property type="project" value="UniProtKB-SubCell"/>
</dbReference>
<dbReference type="GO" id="GO:0036218">
    <property type="term" value="F:dTTP diphosphatase activity"/>
    <property type="evidence" value="ECO:0007669"/>
    <property type="project" value="RHEA"/>
</dbReference>
<dbReference type="GO" id="GO:0036221">
    <property type="term" value="F:UTP diphosphatase activity"/>
    <property type="evidence" value="ECO:0007669"/>
    <property type="project" value="RHEA"/>
</dbReference>
<dbReference type="GO" id="GO:0009117">
    <property type="term" value="P:nucleotide metabolic process"/>
    <property type="evidence" value="ECO:0007669"/>
    <property type="project" value="UniProtKB-KW"/>
</dbReference>
<dbReference type="CDD" id="cd00555">
    <property type="entry name" value="Maf"/>
    <property type="match status" value="1"/>
</dbReference>
<dbReference type="Gene3D" id="3.90.950.10">
    <property type="match status" value="1"/>
</dbReference>
<dbReference type="HAMAP" id="MF_00528">
    <property type="entry name" value="Maf"/>
    <property type="match status" value="1"/>
</dbReference>
<dbReference type="InterPro" id="IPR029001">
    <property type="entry name" value="ITPase-like_fam"/>
</dbReference>
<dbReference type="InterPro" id="IPR003697">
    <property type="entry name" value="Maf-like"/>
</dbReference>
<dbReference type="NCBIfam" id="TIGR00172">
    <property type="entry name" value="maf"/>
    <property type="match status" value="1"/>
</dbReference>
<dbReference type="NCBIfam" id="NF010945">
    <property type="entry name" value="PRK14365.1"/>
    <property type="match status" value="1"/>
</dbReference>
<dbReference type="PANTHER" id="PTHR43213">
    <property type="entry name" value="BIFUNCTIONAL DTTP/UTP PYROPHOSPHATASE/METHYLTRANSFERASE PROTEIN-RELATED"/>
    <property type="match status" value="1"/>
</dbReference>
<dbReference type="PANTHER" id="PTHR43213:SF5">
    <property type="entry name" value="BIFUNCTIONAL DTTP_UTP PYROPHOSPHATASE_METHYLTRANSFERASE PROTEIN-RELATED"/>
    <property type="match status" value="1"/>
</dbReference>
<dbReference type="Pfam" id="PF02545">
    <property type="entry name" value="Maf"/>
    <property type="match status" value="1"/>
</dbReference>
<dbReference type="PIRSF" id="PIRSF006305">
    <property type="entry name" value="Maf"/>
    <property type="match status" value="1"/>
</dbReference>
<dbReference type="SUPFAM" id="SSF52972">
    <property type="entry name" value="ITPase-like"/>
    <property type="match status" value="1"/>
</dbReference>